<sequence length="286" mass="31588">MKCIAIDLDGTLLNKESVISAENREAIKRAVDAGILVTICTGRATFDVKALLDDLDIPIIAANGGTIHDTGYRLISRTLMDQEAGKAIADYLLSKNIYFEVYTDDHLLSPFDGEAKLHAELDILKSANPNEQTDDLWQGAMTQFKQFGIKPIPHIESVFDGGENIYKLLCFSFDMDKLKQAKEELKHHKKLAQTSSGKHIIEILPASSGKGRALTKLADIYGIETQDIYAIGDSPNDLSMFEVAGHRIAMENAIDELKEKSTFVTKSNDENGVAYFIDQLLSGQYA</sequence>
<proteinExistence type="evidence at protein level"/>
<gene>
    <name type="primary">ywtE</name>
    <name type="ordered locus">BSU35850</name>
</gene>
<dbReference type="EC" id="3.1.3.104" evidence="3 5"/>
<dbReference type="EMBL" id="Z92954">
    <property type="protein sequence ID" value="CAB07471.1"/>
    <property type="molecule type" value="Genomic_DNA"/>
</dbReference>
<dbReference type="EMBL" id="AL009126">
    <property type="protein sequence ID" value="CAB15602.1"/>
    <property type="molecule type" value="Genomic_DNA"/>
</dbReference>
<dbReference type="PIR" id="C70070">
    <property type="entry name" value="C70070"/>
</dbReference>
<dbReference type="RefSeq" id="WP_003244395.1">
    <property type="nucleotide sequence ID" value="NZ_OZ025638.1"/>
</dbReference>
<dbReference type="SMR" id="P96741"/>
<dbReference type="FunCoup" id="P96741">
    <property type="interactions" value="281"/>
</dbReference>
<dbReference type="STRING" id="224308.BSU35850"/>
<dbReference type="jPOST" id="P96741"/>
<dbReference type="PaxDb" id="224308-BSU35850"/>
<dbReference type="DNASU" id="936824"/>
<dbReference type="EnsemblBacteria" id="CAB15602">
    <property type="protein sequence ID" value="CAB15602"/>
    <property type="gene ID" value="BSU_35850"/>
</dbReference>
<dbReference type="GeneID" id="936824"/>
<dbReference type="KEGG" id="bsu:BSU35850"/>
<dbReference type="PATRIC" id="fig|224308.179.peg.3881"/>
<dbReference type="eggNOG" id="COG0561">
    <property type="taxonomic scope" value="Bacteria"/>
</dbReference>
<dbReference type="InParanoid" id="P96741"/>
<dbReference type="OrthoDB" id="9806027at2"/>
<dbReference type="PhylomeDB" id="P96741"/>
<dbReference type="BioCyc" id="BSUB:BSU35850-MONOMER"/>
<dbReference type="BRENDA" id="3.1.3.104">
    <property type="organism ID" value="658"/>
</dbReference>
<dbReference type="SABIO-RK" id="P96741"/>
<dbReference type="UniPathway" id="UPA00275">
    <property type="reaction ID" value="UER00403"/>
</dbReference>
<dbReference type="Proteomes" id="UP000001570">
    <property type="component" value="Chromosome"/>
</dbReference>
<dbReference type="GO" id="GO:0005829">
    <property type="term" value="C:cytosol"/>
    <property type="evidence" value="ECO:0000318"/>
    <property type="project" value="GO_Central"/>
</dbReference>
<dbReference type="GO" id="GO:0043726">
    <property type="term" value="F:5-amino-6-(5-phosphoribitylamino)uracil phosphatase activity"/>
    <property type="evidence" value="ECO:0007669"/>
    <property type="project" value="UniProtKB-EC"/>
</dbReference>
<dbReference type="GO" id="GO:0000287">
    <property type="term" value="F:magnesium ion binding"/>
    <property type="evidence" value="ECO:0000318"/>
    <property type="project" value="GO_Central"/>
</dbReference>
<dbReference type="GO" id="GO:0016791">
    <property type="term" value="F:phosphatase activity"/>
    <property type="evidence" value="ECO:0000318"/>
    <property type="project" value="GO_Central"/>
</dbReference>
<dbReference type="GO" id="GO:0009231">
    <property type="term" value="P:riboflavin biosynthetic process"/>
    <property type="evidence" value="ECO:0007669"/>
    <property type="project" value="UniProtKB-UniPathway"/>
</dbReference>
<dbReference type="CDD" id="cd07516">
    <property type="entry name" value="HAD_Pase"/>
    <property type="match status" value="1"/>
</dbReference>
<dbReference type="Gene3D" id="3.30.1240.10">
    <property type="match status" value="1"/>
</dbReference>
<dbReference type="Gene3D" id="3.40.50.1000">
    <property type="entry name" value="HAD superfamily/HAD-like"/>
    <property type="match status" value="1"/>
</dbReference>
<dbReference type="InterPro" id="IPR000150">
    <property type="entry name" value="Cof"/>
</dbReference>
<dbReference type="InterPro" id="IPR036412">
    <property type="entry name" value="HAD-like_sf"/>
</dbReference>
<dbReference type="InterPro" id="IPR006379">
    <property type="entry name" value="HAD-SF_hydro_IIB"/>
</dbReference>
<dbReference type="InterPro" id="IPR023214">
    <property type="entry name" value="HAD_sf"/>
</dbReference>
<dbReference type="NCBIfam" id="TIGR00099">
    <property type="entry name" value="Cof-subfamily"/>
    <property type="match status" value="1"/>
</dbReference>
<dbReference type="NCBIfam" id="TIGR01484">
    <property type="entry name" value="HAD-SF-IIB"/>
    <property type="match status" value="1"/>
</dbReference>
<dbReference type="PANTHER" id="PTHR10000:SF55">
    <property type="entry name" value="5-AMINO-6-(5-PHOSPHO-D-RIBITYLAMINO)URACIL PHOSPHATASE YCSE"/>
    <property type="match status" value="1"/>
</dbReference>
<dbReference type="PANTHER" id="PTHR10000">
    <property type="entry name" value="PHOSPHOSERINE PHOSPHATASE"/>
    <property type="match status" value="1"/>
</dbReference>
<dbReference type="Pfam" id="PF08282">
    <property type="entry name" value="Hydrolase_3"/>
    <property type="match status" value="1"/>
</dbReference>
<dbReference type="SFLD" id="SFLDG01144">
    <property type="entry name" value="C2.B.4:_PGP_Like"/>
    <property type="match status" value="1"/>
</dbReference>
<dbReference type="SFLD" id="SFLDS00003">
    <property type="entry name" value="Haloacid_Dehalogenase"/>
    <property type="match status" value="1"/>
</dbReference>
<dbReference type="SUPFAM" id="SSF56784">
    <property type="entry name" value="HAD-like"/>
    <property type="match status" value="1"/>
</dbReference>
<feature type="chain" id="PRO_0000360502" description="5-amino-6-(5-phospho-D-ribitylamino)uracil phosphatase YwtE">
    <location>
        <begin position="1"/>
        <end position="286"/>
    </location>
</feature>
<feature type="active site" description="Nucleophile" evidence="1">
    <location>
        <position position="7"/>
    </location>
</feature>
<feature type="binding site" evidence="1">
    <location>
        <position position="7"/>
    </location>
    <ligand>
        <name>Mg(2+)</name>
        <dbReference type="ChEBI" id="CHEBI:18420"/>
    </ligand>
</feature>
<feature type="binding site" evidence="1">
    <location>
        <position position="8"/>
    </location>
    <ligand>
        <name>phosphate</name>
        <dbReference type="ChEBI" id="CHEBI:43474"/>
    </ligand>
</feature>
<feature type="binding site" evidence="1">
    <location>
        <position position="9"/>
    </location>
    <ligand>
        <name>Mg(2+)</name>
        <dbReference type="ChEBI" id="CHEBI:18420"/>
    </ligand>
</feature>
<feature type="binding site" evidence="1">
    <location>
        <begin position="41"/>
        <end position="42"/>
    </location>
    <ligand>
        <name>phosphate</name>
        <dbReference type="ChEBI" id="CHEBI:43474"/>
    </ligand>
</feature>
<feature type="binding site" evidence="1">
    <location>
        <position position="210"/>
    </location>
    <ligand>
        <name>phosphate</name>
        <dbReference type="ChEBI" id="CHEBI:43474"/>
    </ligand>
</feature>
<feature type="binding site" evidence="1">
    <location>
        <position position="233"/>
    </location>
    <ligand>
        <name>Mg(2+)</name>
        <dbReference type="ChEBI" id="CHEBI:18420"/>
    </ligand>
</feature>
<feature type="binding site" evidence="1">
    <location>
        <position position="234"/>
    </location>
    <ligand>
        <name>Mg(2+)</name>
        <dbReference type="ChEBI" id="CHEBI:18420"/>
    </ligand>
</feature>
<feature type="binding site" evidence="1">
    <location>
        <position position="236"/>
    </location>
    <ligand>
        <name>phosphate</name>
        <dbReference type="ChEBI" id="CHEBI:43474"/>
    </ligand>
</feature>
<keyword id="KW-0378">Hydrolase</keyword>
<keyword id="KW-0460">Magnesium</keyword>
<keyword id="KW-0479">Metal-binding</keyword>
<keyword id="KW-1185">Reference proteome</keyword>
<keyword id="KW-0686">Riboflavin biosynthesis</keyword>
<comment type="function">
    <text evidence="2 3">Catalyzes the dephosphorylation of the riboflavin precursor 5-amino-6-(5-phospho-D-ribitylamino)uracil and of flavin mononucleotide (FMN) in vitro (PubMed:26316208). Also catalyzes the dephosphorylation of phosphorylated 5-6 carbon sugars and monophosphate nucleotides (NMP) in vitro (PubMed:25848029).</text>
</comment>
<comment type="catalytic activity">
    <reaction evidence="3">
        <text>5-amino-6-(5-phospho-D-ribitylamino)uracil + H2O = 5-amino-6-(D-ribitylamino)uracil + phosphate</text>
        <dbReference type="Rhea" id="RHEA:25197"/>
        <dbReference type="ChEBI" id="CHEBI:15377"/>
        <dbReference type="ChEBI" id="CHEBI:15934"/>
        <dbReference type="ChEBI" id="CHEBI:43474"/>
        <dbReference type="ChEBI" id="CHEBI:58421"/>
        <dbReference type="EC" id="3.1.3.104"/>
    </reaction>
</comment>
<comment type="cofactor">
    <cofactor evidence="2 3">
        <name>Mg(2+)</name>
        <dbReference type="ChEBI" id="CHEBI:18420"/>
    </cofactor>
</comment>
<comment type="biophysicochemical properties">
    <kinetics>
        <KM evidence="3">21 uM for 5-amino-6-(5-phospho-D-ribitylamino)uracil</KM>
        <Vmax evidence="3">0.69 umol/min/mg enzyme with 5-amino-6-(5-phospho-D-ribitylamino)uracil as substrate</Vmax>
        <Vmax evidence="3">7.4 umol/min/mg enzyme with flavin mononucleotide as substrate</Vmax>
    </kinetics>
</comment>
<comment type="pathway">
    <text evidence="3">Cofactor biosynthesis; riboflavin biosynthesis; 5-amino-6-(D-ribitylamino)uracil from GTP: step 4/4.</text>
</comment>
<comment type="similarity">
    <text evidence="4">Belongs to the HAD-like hydrolase superfamily. Cof family.</text>
</comment>
<protein>
    <recommendedName>
        <fullName evidence="6">5-amino-6-(5-phospho-D-ribitylamino)uracil phosphatase YwtE</fullName>
        <ecNumber evidence="3 5">3.1.3.104</ecNumber>
    </recommendedName>
</protein>
<reference key="1">
    <citation type="journal article" date="1997" name="Microbiology">
        <title>The Bacillus subtilis genome from gerBC (311 degrees) to licR (334 degrees).</title>
        <authorList>
            <person name="Presecan E."/>
            <person name="Moszer I."/>
            <person name="Boursier L."/>
            <person name="Cruz Ramos H."/>
            <person name="De La Fuente V."/>
            <person name="Hullo M.-F."/>
            <person name="Lelong C."/>
            <person name="Schleich S."/>
            <person name="Sekowska A."/>
            <person name="Song B.H."/>
            <person name="Villani G."/>
            <person name="Kunst F."/>
            <person name="Danchin A."/>
            <person name="Glaser P."/>
        </authorList>
    </citation>
    <scope>NUCLEOTIDE SEQUENCE [GENOMIC DNA]</scope>
    <source>
        <strain>168</strain>
    </source>
</reference>
<reference key="2">
    <citation type="journal article" date="1997" name="Nature">
        <title>The complete genome sequence of the Gram-positive bacterium Bacillus subtilis.</title>
        <authorList>
            <person name="Kunst F."/>
            <person name="Ogasawara N."/>
            <person name="Moszer I."/>
            <person name="Albertini A.M."/>
            <person name="Alloni G."/>
            <person name="Azevedo V."/>
            <person name="Bertero M.G."/>
            <person name="Bessieres P."/>
            <person name="Bolotin A."/>
            <person name="Borchert S."/>
            <person name="Borriss R."/>
            <person name="Boursier L."/>
            <person name="Brans A."/>
            <person name="Braun M."/>
            <person name="Brignell S.C."/>
            <person name="Bron S."/>
            <person name="Brouillet S."/>
            <person name="Bruschi C.V."/>
            <person name="Caldwell B."/>
            <person name="Capuano V."/>
            <person name="Carter N.M."/>
            <person name="Choi S.-K."/>
            <person name="Codani J.-J."/>
            <person name="Connerton I.F."/>
            <person name="Cummings N.J."/>
            <person name="Daniel R.A."/>
            <person name="Denizot F."/>
            <person name="Devine K.M."/>
            <person name="Duesterhoeft A."/>
            <person name="Ehrlich S.D."/>
            <person name="Emmerson P.T."/>
            <person name="Entian K.-D."/>
            <person name="Errington J."/>
            <person name="Fabret C."/>
            <person name="Ferrari E."/>
            <person name="Foulger D."/>
            <person name="Fritz C."/>
            <person name="Fujita M."/>
            <person name="Fujita Y."/>
            <person name="Fuma S."/>
            <person name="Galizzi A."/>
            <person name="Galleron N."/>
            <person name="Ghim S.-Y."/>
            <person name="Glaser P."/>
            <person name="Goffeau A."/>
            <person name="Golightly E.J."/>
            <person name="Grandi G."/>
            <person name="Guiseppi G."/>
            <person name="Guy B.J."/>
            <person name="Haga K."/>
            <person name="Haiech J."/>
            <person name="Harwood C.R."/>
            <person name="Henaut A."/>
            <person name="Hilbert H."/>
            <person name="Holsappel S."/>
            <person name="Hosono S."/>
            <person name="Hullo M.-F."/>
            <person name="Itaya M."/>
            <person name="Jones L.-M."/>
            <person name="Joris B."/>
            <person name="Karamata D."/>
            <person name="Kasahara Y."/>
            <person name="Klaerr-Blanchard M."/>
            <person name="Klein C."/>
            <person name="Kobayashi Y."/>
            <person name="Koetter P."/>
            <person name="Koningstein G."/>
            <person name="Krogh S."/>
            <person name="Kumano M."/>
            <person name="Kurita K."/>
            <person name="Lapidus A."/>
            <person name="Lardinois S."/>
            <person name="Lauber J."/>
            <person name="Lazarevic V."/>
            <person name="Lee S.-M."/>
            <person name="Levine A."/>
            <person name="Liu H."/>
            <person name="Masuda S."/>
            <person name="Mauel C."/>
            <person name="Medigue C."/>
            <person name="Medina N."/>
            <person name="Mellado R.P."/>
            <person name="Mizuno M."/>
            <person name="Moestl D."/>
            <person name="Nakai S."/>
            <person name="Noback M."/>
            <person name="Noone D."/>
            <person name="O'Reilly M."/>
            <person name="Ogawa K."/>
            <person name="Ogiwara A."/>
            <person name="Oudega B."/>
            <person name="Park S.-H."/>
            <person name="Parro V."/>
            <person name="Pohl T.M."/>
            <person name="Portetelle D."/>
            <person name="Porwollik S."/>
            <person name="Prescott A.M."/>
            <person name="Presecan E."/>
            <person name="Pujic P."/>
            <person name="Purnelle B."/>
            <person name="Rapoport G."/>
            <person name="Rey M."/>
            <person name="Reynolds S."/>
            <person name="Rieger M."/>
            <person name="Rivolta C."/>
            <person name="Rocha E."/>
            <person name="Roche B."/>
            <person name="Rose M."/>
            <person name="Sadaie Y."/>
            <person name="Sato T."/>
            <person name="Scanlan E."/>
            <person name="Schleich S."/>
            <person name="Schroeter R."/>
            <person name="Scoffone F."/>
            <person name="Sekiguchi J."/>
            <person name="Sekowska A."/>
            <person name="Seror S.J."/>
            <person name="Serror P."/>
            <person name="Shin B.-S."/>
            <person name="Soldo B."/>
            <person name="Sorokin A."/>
            <person name="Tacconi E."/>
            <person name="Takagi T."/>
            <person name="Takahashi H."/>
            <person name="Takemaru K."/>
            <person name="Takeuchi M."/>
            <person name="Tamakoshi A."/>
            <person name="Tanaka T."/>
            <person name="Terpstra P."/>
            <person name="Tognoni A."/>
            <person name="Tosato V."/>
            <person name="Uchiyama S."/>
            <person name="Vandenbol M."/>
            <person name="Vannier F."/>
            <person name="Vassarotti A."/>
            <person name="Viari A."/>
            <person name="Wambutt R."/>
            <person name="Wedler E."/>
            <person name="Wedler H."/>
            <person name="Weitzenegger T."/>
            <person name="Winters P."/>
            <person name="Wipat A."/>
            <person name="Yamamoto H."/>
            <person name="Yamane K."/>
            <person name="Yasumoto K."/>
            <person name="Yata K."/>
            <person name="Yoshida K."/>
            <person name="Yoshikawa H.-F."/>
            <person name="Zumstein E."/>
            <person name="Yoshikawa H."/>
            <person name="Danchin A."/>
        </authorList>
    </citation>
    <scope>NUCLEOTIDE SEQUENCE [LARGE SCALE GENOMIC DNA]</scope>
    <source>
        <strain>168</strain>
    </source>
</reference>
<reference key="3">
    <citation type="journal article" date="2015" name="ChemBioChem">
        <title>Catalysis of an essential step in Vitamin B2 biosynthesis by a consortium of broad spectrum hydrolases.</title>
        <authorList>
            <person name="Sarge S."/>
            <person name="Haase I."/>
            <person name="Illarionov B."/>
            <person name="Laudert D."/>
            <person name="Hohmann H.P."/>
            <person name="Bacher A."/>
            <person name="Fischer M."/>
        </authorList>
    </citation>
    <scope>FUNCTION</scope>
    <scope>CATALYTIC ACTIVITY</scope>
    <scope>BIOPHYSICOCHEMICAL PROPERTIES</scope>
    <scope>COFACTOR</scope>
    <scope>PATHWAY</scope>
</reference>
<reference key="4">
    <citation type="journal article" date="2015" name="Proc. Natl. Acad. Sci. U.S.A.">
        <title>Panoramic view of a superfamily of phosphatases through substrate profiling.</title>
        <authorList>
            <person name="Huang H."/>
            <person name="Pandya C."/>
            <person name="Liu C."/>
            <person name="Al-Obaidi N.F."/>
            <person name="Wang M."/>
            <person name="Zheng L."/>
            <person name="Toews Keating S."/>
            <person name="Aono M."/>
            <person name="Love J.D."/>
            <person name="Evans B."/>
            <person name="Seidel R.D."/>
            <person name="Hillerich B.S."/>
            <person name="Garforth S.J."/>
            <person name="Almo S.C."/>
            <person name="Mariano P.S."/>
            <person name="Dunaway-Mariano D."/>
            <person name="Allen K.N."/>
            <person name="Farelli J.D."/>
        </authorList>
    </citation>
    <scope>FUNCTION</scope>
    <scope>COFACTOR</scope>
</reference>
<accession>P96741</accession>
<accession>Q795C9</accession>
<name>YWTE_BACSU</name>
<organism>
    <name type="scientific">Bacillus subtilis (strain 168)</name>
    <dbReference type="NCBI Taxonomy" id="224308"/>
    <lineage>
        <taxon>Bacteria</taxon>
        <taxon>Bacillati</taxon>
        <taxon>Bacillota</taxon>
        <taxon>Bacilli</taxon>
        <taxon>Bacillales</taxon>
        <taxon>Bacillaceae</taxon>
        <taxon>Bacillus</taxon>
    </lineage>
</organism>
<evidence type="ECO:0000250" key="1"/>
<evidence type="ECO:0000269" key="2">
    <source>
    </source>
</evidence>
<evidence type="ECO:0000269" key="3">
    <source>
    </source>
</evidence>
<evidence type="ECO:0000305" key="4"/>
<evidence type="ECO:0000305" key="5">
    <source>
    </source>
</evidence>
<evidence type="ECO:0000305" key="6">
    <source>
    </source>
</evidence>